<proteinExistence type="inferred from homology"/>
<organism>
    <name type="scientific">Methanocaldococcus jannaschii (strain ATCC 43067 / DSM 2661 / JAL-1 / JCM 10045 / NBRC 100440)</name>
    <name type="common">Methanococcus jannaschii</name>
    <dbReference type="NCBI Taxonomy" id="243232"/>
    <lineage>
        <taxon>Archaea</taxon>
        <taxon>Methanobacteriati</taxon>
        <taxon>Methanobacteriota</taxon>
        <taxon>Methanomada group</taxon>
        <taxon>Methanococci</taxon>
        <taxon>Methanococcales</taxon>
        <taxon>Methanocaldococcaceae</taxon>
        <taxon>Methanocaldococcus</taxon>
    </lineage>
</organism>
<feature type="chain" id="PRO_0000154989" description="Probable archaeal histone 3">
    <location>
        <begin position="1"/>
        <end position="67"/>
    </location>
</feature>
<feature type="region of interest" description="Interaction with DNA" evidence="1">
    <location>
        <begin position="20"/>
        <end position="22"/>
    </location>
</feature>
<feature type="region of interest" description="Interaction with DNA" evidence="1">
    <location>
        <begin position="54"/>
        <end position="57"/>
    </location>
</feature>
<feature type="site" description="Interaction with DNA" evidence="1">
    <location>
        <position position="14"/>
    </location>
</feature>
<dbReference type="EMBL" id="L77117">
    <property type="protein sequence ID" value="AAB99261.1"/>
    <property type="molecule type" value="Genomic_DNA"/>
</dbReference>
<dbReference type="PIR" id="A64457">
    <property type="entry name" value="A64457"/>
</dbReference>
<dbReference type="RefSeq" id="WP_010870771.1">
    <property type="nucleotide sequence ID" value="NC_000909.1"/>
</dbReference>
<dbReference type="SMR" id="Q58655"/>
<dbReference type="FunCoup" id="Q58655">
    <property type="interactions" value="3"/>
</dbReference>
<dbReference type="STRING" id="243232.MJ_1258"/>
<dbReference type="PaxDb" id="243232-MJ_1258"/>
<dbReference type="EnsemblBacteria" id="AAB99261">
    <property type="protein sequence ID" value="AAB99261"/>
    <property type="gene ID" value="MJ_1258"/>
</dbReference>
<dbReference type="GeneID" id="1452156"/>
<dbReference type="KEGG" id="mja:MJ_1258"/>
<dbReference type="eggNOG" id="arCOG02144">
    <property type="taxonomic scope" value="Archaea"/>
</dbReference>
<dbReference type="HOGENOM" id="CLU_192667_0_0_2"/>
<dbReference type="InParanoid" id="Q58655"/>
<dbReference type="PhylomeDB" id="Q58655"/>
<dbReference type="Proteomes" id="UP000000805">
    <property type="component" value="Chromosome"/>
</dbReference>
<dbReference type="GO" id="GO:0005694">
    <property type="term" value="C:chromosome"/>
    <property type="evidence" value="ECO:0007669"/>
    <property type="project" value="UniProtKB-SubCell"/>
</dbReference>
<dbReference type="GO" id="GO:0005737">
    <property type="term" value="C:cytoplasm"/>
    <property type="evidence" value="ECO:0007669"/>
    <property type="project" value="UniProtKB-SubCell"/>
</dbReference>
<dbReference type="GO" id="GO:0003677">
    <property type="term" value="F:DNA binding"/>
    <property type="evidence" value="ECO:0007669"/>
    <property type="project" value="UniProtKB-KW"/>
</dbReference>
<dbReference type="GO" id="GO:0046982">
    <property type="term" value="F:protein heterodimerization activity"/>
    <property type="evidence" value="ECO:0007669"/>
    <property type="project" value="InterPro"/>
</dbReference>
<dbReference type="CDD" id="cd22909">
    <property type="entry name" value="HFD_archaea_histone-like"/>
    <property type="match status" value="1"/>
</dbReference>
<dbReference type="Gene3D" id="1.10.20.10">
    <property type="entry name" value="Histone, subunit A"/>
    <property type="match status" value="1"/>
</dbReference>
<dbReference type="InterPro" id="IPR050947">
    <property type="entry name" value="Archaeal_histone_HMF"/>
</dbReference>
<dbReference type="InterPro" id="IPR003958">
    <property type="entry name" value="CBFA_NFYB_domain"/>
</dbReference>
<dbReference type="InterPro" id="IPR009072">
    <property type="entry name" value="Histone-fold"/>
</dbReference>
<dbReference type="InterPro" id="IPR050004">
    <property type="entry name" value="HmfB-like"/>
</dbReference>
<dbReference type="NCBIfam" id="NF043032">
    <property type="entry name" value="archaea_histone"/>
    <property type="match status" value="1"/>
</dbReference>
<dbReference type="PANTHER" id="PTHR47828">
    <property type="entry name" value="ARCHAEAL HISTONE A"/>
    <property type="match status" value="1"/>
</dbReference>
<dbReference type="PANTHER" id="PTHR47828:SF1">
    <property type="entry name" value="ARCHAEAL HISTONE A"/>
    <property type="match status" value="1"/>
</dbReference>
<dbReference type="Pfam" id="PF00808">
    <property type="entry name" value="CBFD_NFYB_HMF"/>
    <property type="match status" value="1"/>
</dbReference>
<dbReference type="SUPFAM" id="SSF47113">
    <property type="entry name" value="Histone-fold"/>
    <property type="match status" value="1"/>
</dbReference>
<name>HJA3_METJA</name>
<sequence length="67" mass="7245">MAELPVAPCVRILKKAGAQRVSEAAGKYFAEALEEIALEIARKSVDLAKHAKRKTVKVEDVKAALRG</sequence>
<protein>
    <recommendedName>
        <fullName>Probable archaeal histone 3</fullName>
    </recommendedName>
</protein>
<comment type="function">
    <text evidence="1">Binds and compact DNA (95 to 150 base pairs) to form nucleosome-like structures that contain positive DNA supercoils. Increases the resistance of DNA to thermal denaturation (in vitro).</text>
</comment>
<comment type="subunit">
    <text evidence="1">Homodimer or heterodimer with another histone. Dimers then assemble into higher oligomers, with the DNA wrapped around the protein core (By similarity).</text>
</comment>
<comment type="subcellular location">
    <subcellularLocation>
        <location evidence="2">Cytoplasm</location>
    </subcellularLocation>
    <subcellularLocation>
        <location evidence="2">Chromosome</location>
    </subcellularLocation>
</comment>
<comment type="similarity">
    <text evidence="2">Belongs to the archaeal histone HMF family.</text>
</comment>
<evidence type="ECO:0000250" key="1">
    <source>
        <dbReference type="UniProtKB" id="P19267"/>
    </source>
</evidence>
<evidence type="ECO:0000305" key="2"/>
<keyword id="KW-0158">Chromosome</keyword>
<keyword id="KW-0963">Cytoplasm</keyword>
<keyword id="KW-0238">DNA-binding</keyword>
<keyword id="KW-1185">Reference proteome</keyword>
<gene>
    <name type="ordered locus">MJ1258</name>
</gene>
<accession>Q58655</accession>
<reference key="1">
    <citation type="journal article" date="1996" name="Science">
        <title>Complete genome sequence of the methanogenic archaeon, Methanococcus jannaschii.</title>
        <authorList>
            <person name="Bult C.J."/>
            <person name="White O."/>
            <person name="Olsen G.J."/>
            <person name="Zhou L."/>
            <person name="Fleischmann R.D."/>
            <person name="Sutton G.G."/>
            <person name="Blake J.A."/>
            <person name="FitzGerald L.M."/>
            <person name="Clayton R.A."/>
            <person name="Gocayne J.D."/>
            <person name="Kerlavage A.R."/>
            <person name="Dougherty B.A."/>
            <person name="Tomb J.-F."/>
            <person name="Adams M.D."/>
            <person name="Reich C.I."/>
            <person name="Overbeek R."/>
            <person name="Kirkness E.F."/>
            <person name="Weinstock K.G."/>
            <person name="Merrick J.M."/>
            <person name="Glodek A."/>
            <person name="Scott J.L."/>
            <person name="Geoghagen N.S.M."/>
            <person name="Weidman J.F."/>
            <person name="Fuhrmann J.L."/>
            <person name="Nguyen D."/>
            <person name="Utterback T.R."/>
            <person name="Kelley J.M."/>
            <person name="Peterson J.D."/>
            <person name="Sadow P.W."/>
            <person name="Hanna M.C."/>
            <person name="Cotton M.D."/>
            <person name="Roberts K.M."/>
            <person name="Hurst M.A."/>
            <person name="Kaine B.P."/>
            <person name="Borodovsky M."/>
            <person name="Klenk H.-P."/>
            <person name="Fraser C.M."/>
            <person name="Smith H.O."/>
            <person name="Woese C.R."/>
            <person name="Venter J.C."/>
        </authorList>
    </citation>
    <scope>NUCLEOTIDE SEQUENCE [LARGE SCALE GENOMIC DNA]</scope>
    <source>
        <strain>ATCC 43067 / DSM 2661 / JAL-1 / JCM 10045 / NBRC 100440</strain>
    </source>
</reference>